<name>PETN_EUCGG</name>
<keyword id="KW-0150">Chloroplast</keyword>
<keyword id="KW-0249">Electron transport</keyword>
<keyword id="KW-0472">Membrane</keyword>
<keyword id="KW-0602">Photosynthesis</keyword>
<keyword id="KW-0934">Plastid</keyword>
<keyword id="KW-0793">Thylakoid</keyword>
<keyword id="KW-0812">Transmembrane</keyword>
<keyword id="KW-1133">Transmembrane helix</keyword>
<keyword id="KW-0813">Transport</keyword>
<comment type="function">
    <text evidence="1">Component of the cytochrome b6-f complex, which mediates electron transfer between photosystem II (PSII) and photosystem I (PSI), cyclic electron flow around PSI, and state transitions.</text>
</comment>
<comment type="subunit">
    <text evidence="1">The 4 large subunits of the cytochrome b6-f complex are cytochrome b6, subunit IV (17 kDa polypeptide, PetD), cytochrome f and the Rieske protein, while the 4 small subunits are PetG, PetL, PetM and PetN. The complex functions as a dimer.</text>
</comment>
<comment type="subcellular location">
    <subcellularLocation>
        <location>Plastid</location>
        <location>Chloroplast thylakoid membrane</location>
        <topology>Single-pass membrane protein</topology>
    </subcellularLocation>
</comment>
<comment type="similarity">
    <text evidence="1">Belongs to the PetN family.</text>
</comment>
<gene>
    <name evidence="1" type="primary">petN</name>
</gene>
<feature type="chain" id="PRO_0000275550" description="Cytochrome b6-f complex subunit 8">
    <location>
        <begin position="1"/>
        <end position="29"/>
    </location>
</feature>
<feature type="transmembrane region" description="Helical" evidence="1">
    <location>
        <begin position="3"/>
        <end position="23"/>
    </location>
</feature>
<geneLocation type="chloroplast"/>
<organism>
    <name type="scientific">Eucalyptus globulus subsp. globulus</name>
    <name type="common">Tasmanian blue gum</name>
    <dbReference type="NCBI Taxonomy" id="71271"/>
    <lineage>
        <taxon>Eukaryota</taxon>
        <taxon>Viridiplantae</taxon>
        <taxon>Streptophyta</taxon>
        <taxon>Embryophyta</taxon>
        <taxon>Tracheophyta</taxon>
        <taxon>Spermatophyta</taxon>
        <taxon>Magnoliopsida</taxon>
        <taxon>eudicotyledons</taxon>
        <taxon>Gunneridae</taxon>
        <taxon>Pentapetalae</taxon>
        <taxon>rosids</taxon>
        <taxon>malvids</taxon>
        <taxon>Myrtales</taxon>
        <taxon>Myrtaceae</taxon>
        <taxon>Myrtoideae</taxon>
        <taxon>Eucalypteae</taxon>
        <taxon>Eucalyptus</taxon>
    </lineage>
</organism>
<evidence type="ECO:0000255" key="1">
    <source>
        <dbReference type="HAMAP-Rule" id="MF_00395"/>
    </source>
</evidence>
<proteinExistence type="inferred from homology"/>
<dbReference type="EMBL" id="AY780259">
    <property type="protein sequence ID" value="AAX21022.1"/>
    <property type="molecule type" value="Genomic_DNA"/>
</dbReference>
<dbReference type="RefSeq" id="YP_636292.1">
    <property type="nucleotide sequence ID" value="NC_008115.1"/>
</dbReference>
<dbReference type="SMR" id="Q49L05"/>
<dbReference type="GeneID" id="4108364"/>
<dbReference type="GO" id="GO:0009535">
    <property type="term" value="C:chloroplast thylakoid membrane"/>
    <property type="evidence" value="ECO:0007669"/>
    <property type="project" value="UniProtKB-SubCell"/>
</dbReference>
<dbReference type="GO" id="GO:0009512">
    <property type="term" value="C:cytochrome b6f complex"/>
    <property type="evidence" value="ECO:0007669"/>
    <property type="project" value="InterPro"/>
</dbReference>
<dbReference type="GO" id="GO:0045158">
    <property type="term" value="F:electron transporter, transferring electrons within cytochrome b6/f complex of photosystem II activity"/>
    <property type="evidence" value="ECO:0007669"/>
    <property type="project" value="InterPro"/>
</dbReference>
<dbReference type="GO" id="GO:0017004">
    <property type="term" value="P:cytochrome complex assembly"/>
    <property type="evidence" value="ECO:0007669"/>
    <property type="project" value="UniProtKB-UniRule"/>
</dbReference>
<dbReference type="GO" id="GO:0015979">
    <property type="term" value="P:photosynthesis"/>
    <property type="evidence" value="ECO:0007669"/>
    <property type="project" value="UniProtKB-KW"/>
</dbReference>
<dbReference type="HAMAP" id="MF_00395">
    <property type="entry name" value="Cytb6_f_PetN"/>
    <property type="match status" value="1"/>
</dbReference>
<dbReference type="InterPro" id="IPR036143">
    <property type="entry name" value="Cytochr_b6-f_cplx_su8_sf"/>
</dbReference>
<dbReference type="InterPro" id="IPR005497">
    <property type="entry name" value="Cytochrome_b6-f_cplx_su8"/>
</dbReference>
<dbReference type="Pfam" id="PF03742">
    <property type="entry name" value="PetN"/>
    <property type="match status" value="1"/>
</dbReference>
<dbReference type="SUPFAM" id="SSF103451">
    <property type="entry name" value="PetN subunit of the cytochrome b6f complex"/>
    <property type="match status" value="1"/>
</dbReference>
<sequence>MDIVSLAWAALMVVFTFSLSLVVWGRSGL</sequence>
<reference key="1">
    <citation type="journal article" date="2005" name="DNA Res.">
        <title>Complete nucleotide sequence of the chloroplast genome from the Tasmanian blue gum, Eucalyptus globulus (Myrtaceae).</title>
        <authorList>
            <person name="Steane D.A."/>
        </authorList>
    </citation>
    <scope>NUCLEOTIDE SEQUENCE [LARGE SCALE GENOMIC DNA]</scope>
</reference>
<accession>Q49L05</accession>
<protein>
    <recommendedName>
        <fullName evidence="1">Cytochrome b6-f complex subunit 8</fullName>
    </recommendedName>
    <alternativeName>
        <fullName evidence="1">Cytochrome b6-f complex subunit PetN</fullName>
    </alternativeName>
    <alternativeName>
        <fullName evidence="1">Cytochrome b6-f complex subunit VIII</fullName>
    </alternativeName>
</protein>